<name>LEPA_ACET2</name>
<sequence>MASERQKKIRNFCIIAHIDHGKSTLADRLLEMTGVLTEREMEDQVLDTMEIERERGITIKAQAVRMVYKAKDGEEYILNLIDTPGHVDFNYEVSRSLAACEGAILVVDAAQGIEAQTLANVYLALDHDLEILPVINKIDLPSAQPDVVKKEIEDVIGLDASEAPLISAKNGINIEAVLESVVKNVPPPEGDENAPLRALIFDSYYDSYKGVIVYIRVKEGTLKLGDKVRMMYTNKEFTVTEIGYMKPGGLVPGTQLSAGEVGYFAASIKNVKDTRVGDTVTTADNPAKEPLPGYKKVNPMVFCGIYPADGSKYGDLRDALEKLQLNDASLTFEPESSVALGFGFRCGFLGLLHMEIIQERLEREFDFDLVTTAPSVIYKVTKTNGETLYIDNPTNLPPPAEIKTMEEPIVKATIMTPTEYVGNIMELAQERRGIYKDMTYIDEGRVMLTYELPLNEIIYDFFDALKSRTKGYASLDYEMLGYRESDLVKLDIMLNGEIVDALSFIVHREKAYARGRRIAEKLKEAIPRQQFEVPIQACIGGKIIARETVKAYRKDVLAKCYGGDITRKKKLLEKQKEGKKRMRQIGTVEVPQEAFMSVLKLDT</sequence>
<accession>A3DF29</accession>
<protein>
    <recommendedName>
        <fullName evidence="1">Elongation factor 4</fullName>
        <shortName evidence="1">EF-4</shortName>
        <ecNumber evidence="1">3.6.5.n1</ecNumber>
    </recommendedName>
    <alternativeName>
        <fullName evidence="1">Ribosomal back-translocase LepA</fullName>
    </alternativeName>
</protein>
<organism>
    <name type="scientific">Acetivibrio thermocellus (strain ATCC 27405 / DSM 1237 / JCM 9322 / NBRC 103400 / NCIMB 10682 / NRRL B-4536 / VPI 7372)</name>
    <name type="common">Clostridium thermocellum</name>
    <dbReference type="NCBI Taxonomy" id="203119"/>
    <lineage>
        <taxon>Bacteria</taxon>
        <taxon>Bacillati</taxon>
        <taxon>Bacillota</taxon>
        <taxon>Clostridia</taxon>
        <taxon>Eubacteriales</taxon>
        <taxon>Oscillospiraceae</taxon>
        <taxon>Acetivibrio</taxon>
    </lineage>
</organism>
<feature type="chain" id="PRO_1000031992" description="Elongation factor 4">
    <location>
        <begin position="1"/>
        <end position="603"/>
    </location>
</feature>
<feature type="domain" description="tr-type G">
    <location>
        <begin position="7"/>
        <end position="189"/>
    </location>
</feature>
<feature type="binding site" evidence="1">
    <location>
        <begin position="19"/>
        <end position="24"/>
    </location>
    <ligand>
        <name>GTP</name>
        <dbReference type="ChEBI" id="CHEBI:37565"/>
    </ligand>
</feature>
<feature type="binding site" evidence="1">
    <location>
        <begin position="136"/>
        <end position="139"/>
    </location>
    <ligand>
        <name>GTP</name>
        <dbReference type="ChEBI" id="CHEBI:37565"/>
    </ligand>
</feature>
<gene>
    <name evidence="1" type="primary">lepA</name>
    <name type="ordered locus">Cthe_1326</name>
</gene>
<keyword id="KW-1003">Cell membrane</keyword>
<keyword id="KW-0342">GTP-binding</keyword>
<keyword id="KW-0378">Hydrolase</keyword>
<keyword id="KW-0472">Membrane</keyword>
<keyword id="KW-0547">Nucleotide-binding</keyword>
<keyword id="KW-0648">Protein biosynthesis</keyword>
<keyword id="KW-1185">Reference proteome</keyword>
<proteinExistence type="inferred from homology"/>
<dbReference type="EC" id="3.6.5.n1" evidence="1"/>
<dbReference type="EMBL" id="CP000568">
    <property type="protein sequence ID" value="ABN52558.1"/>
    <property type="molecule type" value="Genomic_DNA"/>
</dbReference>
<dbReference type="RefSeq" id="WP_003517026.1">
    <property type="nucleotide sequence ID" value="NC_009012.1"/>
</dbReference>
<dbReference type="SMR" id="A3DF29"/>
<dbReference type="STRING" id="203119.Cthe_1326"/>
<dbReference type="GeneID" id="35805763"/>
<dbReference type="KEGG" id="cth:Cthe_1326"/>
<dbReference type="eggNOG" id="COG0481">
    <property type="taxonomic scope" value="Bacteria"/>
</dbReference>
<dbReference type="HOGENOM" id="CLU_009995_3_3_9"/>
<dbReference type="OrthoDB" id="9801591at2"/>
<dbReference type="Proteomes" id="UP000002145">
    <property type="component" value="Chromosome"/>
</dbReference>
<dbReference type="GO" id="GO:0005886">
    <property type="term" value="C:plasma membrane"/>
    <property type="evidence" value="ECO:0007669"/>
    <property type="project" value="UniProtKB-SubCell"/>
</dbReference>
<dbReference type="GO" id="GO:0005525">
    <property type="term" value="F:GTP binding"/>
    <property type="evidence" value="ECO:0007669"/>
    <property type="project" value="UniProtKB-UniRule"/>
</dbReference>
<dbReference type="GO" id="GO:0003924">
    <property type="term" value="F:GTPase activity"/>
    <property type="evidence" value="ECO:0007669"/>
    <property type="project" value="UniProtKB-UniRule"/>
</dbReference>
<dbReference type="GO" id="GO:0043022">
    <property type="term" value="F:ribosome binding"/>
    <property type="evidence" value="ECO:0007669"/>
    <property type="project" value="UniProtKB-UniRule"/>
</dbReference>
<dbReference type="GO" id="GO:0003746">
    <property type="term" value="F:translation elongation factor activity"/>
    <property type="evidence" value="ECO:0007669"/>
    <property type="project" value="UniProtKB-UniRule"/>
</dbReference>
<dbReference type="GO" id="GO:0045727">
    <property type="term" value="P:positive regulation of translation"/>
    <property type="evidence" value="ECO:0007669"/>
    <property type="project" value="UniProtKB-UniRule"/>
</dbReference>
<dbReference type="CDD" id="cd03699">
    <property type="entry name" value="EF4_II"/>
    <property type="match status" value="1"/>
</dbReference>
<dbReference type="CDD" id="cd16260">
    <property type="entry name" value="EF4_III"/>
    <property type="match status" value="1"/>
</dbReference>
<dbReference type="CDD" id="cd01890">
    <property type="entry name" value="LepA"/>
    <property type="match status" value="1"/>
</dbReference>
<dbReference type="CDD" id="cd03709">
    <property type="entry name" value="lepA_C"/>
    <property type="match status" value="1"/>
</dbReference>
<dbReference type="FunFam" id="3.40.50.300:FF:000078">
    <property type="entry name" value="Elongation factor 4"/>
    <property type="match status" value="1"/>
</dbReference>
<dbReference type="FunFam" id="2.40.30.10:FF:000015">
    <property type="entry name" value="Translation factor GUF1, mitochondrial"/>
    <property type="match status" value="1"/>
</dbReference>
<dbReference type="FunFam" id="3.30.70.240:FF:000007">
    <property type="entry name" value="Translation factor GUF1, mitochondrial"/>
    <property type="match status" value="1"/>
</dbReference>
<dbReference type="FunFam" id="3.30.70.2570:FF:000001">
    <property type="entry name" value="Translation factor GUF1, mitochondrial"/>
    <property type="match status" value="1"/>
</dbReference>
<dbReference type="FunFam" id="3.30.70.870:FF:000004">
    <property type="entry name" value="Translation factor GUF1, mitochondrial"/>
    <property type="match status" value="1"/>
</dbReference>
<dbReference type="Gene3D" id="3.30.70.240">
    <property type="match status" value="1"/>
</dbReference>
<dbReference type="Gene3D" id="3.30.70.2570">
    <property type="entry name" value="Elongation factor 4, C-terminal domain"/>
    <property type="match status" value="1"/>
</dbReference>
<dbReference type="Gene3D" id="3.30.70.870">
    <property type="entry name" value="Elongation Factor G (Translational Gtpase), domain 3"/>
    <property type="match status" value="1"/>
</dbReference>
<dbReference type="Gene3D" id="3.40.50.300">
    <property type="entry name" value="P-loop containing nucleotide triphosphate hydrolases"/>
    <property type="match status" value="1"/>
</dbReference>
<dbReference type="Gene3D" id="2.40.30.10">
    <property type="entry name" value="Translation factors"/>
    <property type="match status" value="1"/>
</dbReference>
<dbReference type="HAMAP" id="MF_00071">
    <property type="entry name" value="LepA"/>
    <property type="match status" value="1"/>
</dbReference>
<dbReference type="InterPro" id="IPR006297">
    <property type="entry name" value="EF-4"/>
</dbReference>
<dbReference type="InterPro" id="IPR035647">
    <property type="entry name" value="EFG_III/V"/>
</dbReference>
<dbReference type="InterPro" id="IPR000640">
    <property type="entry name" value="EFG_V-like"/>
</dbReference>
<dbReference type="InterPro" id="IPR004161">
    <property type="entry name" value="EFTu-like_2"/>
</dbReference>
<dbReference type="InterPro" id="IPR031157">
    <property type="entry name" value="G_TR_CS"/>
</dbReference>
<dbReference type="InterPro" id="IPR038363">
    <property type="entry name" value="LepA_C_sf"/>
</dbReference>
<dbReference type="InterPro" id="IPR013842">
    <property type="entry name" value="LepA_CTD"/>
</dbReference>
<dbReference type="InterPro" id="IPR035654">
    <property type="entry name" value="LepA_IV"/>
</dbReference>
<dbReference type="InterPro" id="IPR027417">
    <property type="entry name" value="P-loop_NTPase"/>
</dbReference>
<dbReference type="InterPro" id="IPR005225">
    <property type="entry name" value="Small_GTP-bd"/>
</dbReference>
<dbReference type="InterPro" id="IPR000795">
    <property type="entry name" value="T_Tr_GTP-bd_dom"/>
</dbReference>
<dbReference type="InterPro" id="IPR009000">
    <property type="entry name" value="Transl_B-barrel_sf"/>
</dbReference>
<dbReference type="NCBIfam" id="TIGR01393">
    <property type="entry name" value="lepA"/>
    <property type="match status" value="1"/>
</dbReference>
<dbReference type="NCBIfam" id="TIGR00231">
    <property type="entry name" value="small_GTP"/>
    <property type="match status" value="1"/>
</dbReference>
<dbReference type="PANTHER" id="PTHR43512:SF4">
    <property type="entry name" value="TRANSLATION FACTOR GUF1 HOMOLOG, CHLOROPLASTIC"/>
    <property type="match status" value="1"/>
</dbReference>
<dbReference type="PANTHER" id="PTHR43512">
    <property type="entry name" value="TRANSLATION FACTOR GUF1-RELATED"/>
    <property type="match status" value="1"/>
</dbReference>
<dbReference type="Pfam" id="PF00679">
    <property type="entry name" value="EFG_C"/>
    <property type="match status" value="1"/>
</dbReference>
<dbReference type="Pfam" id="PF00009">
    <property type="entry name" value="GTP_EFTU"/>
    <property type="match status" value="1"/>
</dbReference>
<dbReference type="Pfam" id="PF03144">
    <property type="entry name" value="GTP_EFTU_D2"/>
    <property type="match status" value="1"/>
</dbReference>
<dbReference type="Pfam" id="PF06421">
    <property type="entry name" value="LepA_C"/>
    <property type="match status" value="1"/>
</dbReference>
<dbReference type="PRINTS" id="PR00315">
    <property type="entry name" value="ELONGATNFCT"/>
</dbReference>
<dbReference type="SMART" id="SM00838">
    <property type="entry name" value="EFG_C"/>
    <property type="match status" value="1"/>
</dbReference>
<dbReference type="SUPFAM" id="SSF54980">
    <property type="entry name" value="EF-G C-terminal domain-like"/>
    <property type="match status" value="2"/>
</dbReference>
<dbReference type="SUPFAM" id="SSF52540">
    <property type="entry name" value="P-loop containing nucleoside triphosphate hydrolases"/>
    <property type="match status" value="1"/>
</dbReference>
<dbReference type="SUPFAM" id="SSF50447">
    <property type="entry name" value="Translation proteins"/>
    <property type="match status" value="1"/>
</dbReference>
<dbReference type="PROSITE" id="PS00301">
    <property type="entry name" value="G_TR_1"/>
    <property type="match status" value="1"/>
</dbReference>
<dbReference type="PROSITE" id="PS51722">
    <property type="entry name" value="G_TR_2"/>
    <property type="match status" value="1"/>
</dbReference>
<comment type="function">
    <text evidence="1">Required for accurate and efficient protein synthesis under certain stress conditions. May act as a fidelity factor of the translation reaction, by catalyzing a one-codon backward translocation of tRNAs on improperly translocated ribosomes. Back-translocation proceeds from a post-translocation (POST) complex to a pre-translocation (PRE) complex, thus giving elongation factor G a second chance to translocate the tRNAs correctly. Binds to ribosomes in a GTP-dependent manner.</text>
</comment>
<comment type="catalytic activity">
    <reaction evidence="1">
        <text>GTP + H2O = GDP + phosphate + H(+)</text>
        <dbReference type="Rhea" id="RHEA:19669"/>
        <dbReference type="ChEBI" id="CHEBI:15377"/>
        <dbReference type="ChEBI" id="CHEBI:15378"/>
        <dbReference type="ChEBI" id="CHEBI:37565"/>
        <dbReference type="ChEBI" id="CHEBI:43474"/>
        <dbReference type="ChEBI" id="CHEBI:58189"/>
        <dbReference type="EC" id="3.6.5.n1"/>
    </reaction>
</comment>
<comment type="subcellular location">
    <subcellularLocation>
        <location evidence="1">Cell membrane</location>
        <topology evidence="1">Peripheral membrane protein</topology>
        <orientation evidence="1">Cytoplasmic side</orientation>
    </subcellularLocation>
</comment>
<comment type="similarity">
    <text evidence="1">Belongs to the TRAFAC class translation factor GTPase superfamily. Classic translation factor GTPase family. LepA subfamily.</text>
</comment>
<evidence type="ECO:0000255" key="1">
    <source>
        <dbReference type="HAMAP-Rule" id="MF_00071"/>
    </source>
</evidence>
<reference key="1">
    <citation type="submission" date="2007-02" db="EMBL/GenBank/DDBJ databases">
        <title>Complete sequence of Clostridium thermocellum ATCC 27405.</title>
        <authorList>
            <consortium name="US DOE Joint Genome Institute"/>
            <person name="Copeland A."/>
            <person name="Lucas S."/>
            <person name="Lapidus A."/>
            <person name="Barry K."/>
            <person name="Detter J.C."/>
            <person name="Glavina del Rio T."/>
            <person name="Hammon N."/>
            <person name="Israni S."/>
            <person name="Dalin E."/>
            <person name="Tice H."/>
            <person name="Pitluck S."/>
            <person name="Chertkov O."/>
            <person name="Brettin T."/>
            <person name="Bruce D."/>
            <person name="Han C."/>
            <person name="Tapia R."/>
            <person name="Gilna P."/>
            <person name="Schmutz J."/>
            <person name="Larimer F."/>
            <person name="Land M."/>
            <person name="Hauser L."/>
            <person name="Kyrpides N."/>
            <person name="Mikhailova N."/>
            <person name="Wu J.H.D."/>
            <person name="Newcomb M."/>
            <person name="Richardson P."/>
        </authorList>
    </citation>
    <scope>NUCLEOTIDE SEQUENCE [LARGE SCALE GENOMIC DNA]</scope>
    <source>
        <strain>ATCC 27405 / DSM 1237 / JCM 9322 / NBRC 103400 / NCIMB 10682 / NRRL B-4536 / VPI 7372</strain>
    </source>
</reference>